<comment type="function">
    <text evidence="1">Catalyzes the reversible oxidation of malate to oxaloacetate.</text>
</comment>
<comment type="catalytic activity">
    <reaction evidence="2">
        <text>(S)-malate + NAD(+) = oxaloacetate + NADH + H(+)</text>
        <dbReference type="Rhea" id="RHEA:21432"/>
        <dbReference type="ChEBI" id="CHEBI:15378"/>
        <dbReference type="ChEBI" id="CHEBI:15589"/>
        <dbReference type="ChEBI" id="CHEBI:16452"/>
        <dbReference type="ChEBI" id="CHEBI:57540"/>
        <dbReference type="ChEBI" id="CHEBI:57945"/>
        <dbReference type="EC" id="1.1.1.37"/>
    </reaction>
</comment>
<comment type="subunit">
    <text evidence="1">Homodimer.</text>
</comment>
<comment type="similarity">
    <text evidence="3">Belongs to the LDH/MDH superfamily. MDH type 1 family.</text>
</comment>
<name>MDH_KLEPN</name>
<gene>
    <name type="primary">mdh</name>
</gene>
<reference key="1">
    <citation type="journal article" date="1997" name="J. Bacteriol.">
        <title>Structural studies of malate dehydrogenases (MDHs): MDHs in Brevundimonas species are the first reported MDHs in Proteobacteria which resemble lactate dehydrogenases in primary structure.</title>
        <authorList>
            <person name="Charnock C."/>
        </authorList>
    </citation>
    <scope>PROTEIN SEQUENCE OF 1-21</scope>
</reference>
<reference key="2">
    <citation type="journal article" date="2004" name="Antimicrob. Agents Chemother.">
        <title>Diversity and evolution of the class A chromosomal beta-lactamase gene in Klebsiella pneumoniae.</title>
        <authorList>
            <person name="Haeggman S."/>
            <person name="Loefdahl S."/>
            <person name="Paauw A."/>
            <person name="Verhoef J."/>
            <person name="Brisse S."/>
        </authorList>
    </citation>
    <scope>NUCLEOTIDE SEQUENCE [GENOMIC DNA] OF 22-135</scope>
    <source>
        <strain>1976E</strain>
        <strain>ATCC 11296</strain>
        <strain>ATCC 13883 / DSM 30104 / JCM 1662 / NBRC 14940 / NCIMB 13281 / NCTC 9633</strain>
        <strain>ES694:2</strain>
        <strain>HU653:4</strain>
        <strain>JO436:1</strain>
        <strain>JO757:2</strain>
        <strain>KK427:2</strain>
        <strain>MA207:1</strain>
        <strain>OR803:4</strain>
        <strain>OR95:2</strain>
        <strain>SB1</strain>
        <strain>SB18</strain>
        <strain>SB30</strain>
        <strain>SB31</strain>
        <strain>SB59</strain>
        <strain>SB95</strain>
        <strain>SB96</strain>
        <strain>SO661:2</strain>
        <strain>UD1001:4</strain>
        <strain>UD580:1</strain>
        <strain>UD711:2</strain>
        <strain>UD827:1</strain>
        <strain>UD890:1</strain>
        <strain>UD892:1</strain>
        <strain>VA680:2</strain>
    </source>
</reference>
<evidence type="ECO:0000250" key="1"/>
<evidence type="ECO:0000255" key="2">
    <source>
        <dbReference type="PROSITE-ProRule" id="PRU10004"/>
    </source>
</evidence>
<evidence type="ECO:0000305" key="3"/>
<dbReference type="EC" id="1.1.1.37"/>
<dbReference type="EMBL" id="AJ635372">
    <property type="protein sequence ID" value="CAG25783.1"/>
    <property type="molecule type" value="Genomic_DNA"/>
</dbReference>
<dbReference type="EMBL" id="AJ635373">
    <property type="protein sequence ID" value="CAG25784.1"/>
    <property type="molecule type" value="Genomic_DNA"/>
</dbReference>
<dbReference type="EMBL" id="AJ635374">
    <property type="protein sequence ID" value="CAG25785.1"/>
    <property type="molecule type" value="Genomic_DNA"/>
</dbReference>
<dbReference type="EMBL" id="AJ635375">
    <property type="protein sequence ID" value="CAG25786.1"/>
    <property type="molecule type" value="Genomic_DNA"/>
</dbReference>
<dbReference type="EMBL" id="AJ635376">
    <property type="protein sequence ID" value="CAG25787.1"/>
    <property type="molecule type" value="Genomic_DNA"/>
</dbReference>
<dbReference type="EMBL" id="AJ635377">
    <property type="protein sequence ID" value="CAG25788.1"/>
    <property type="molecule type" value="Genomic_DNA"/>
</dbReference>
<dbReference type="EMBL" id="AJ635378">
    <property type="protein sequence ID" value="CAG25789.1"/>
    <property type="molecule type" value="Genomic_DNA"/>
</dbReference>
<dbReference type="EMBL" id="AJ635380">
    <property type="protein sequence ID" value="CAG25791.1"/>
    <property type="molecule type" value="Genomic_DNA"/>
</dbReference>
<dbReference type="EMBL" id="AJ635381">
    <property type="protein sequence ID" value="CAG25792.1"/>
    <property type="molecule type" value="Genomic_DNA"/>
</dbReference>
<dbReference type="EMBL" id="AJ635382">
    <property type="protein sequence ID" value="CAG25793.1"/>
    <property type="molecule type" value="Genomic_DNA"/>
</dbReference>
<dbReference type="EMBL" id="AJ635383">
    <property type="protein sequence ID" value="CAG25794.1"/>
    <property type="molecule type" value="Genomic_DNA"/>
</dbReference>
<dbReference type="EMBL" id="AJ635384">
    <property type="protein sequence ID" value="CAG25795.1"/>
    <property type="molecule type" value="Genomic_DNA"/>
</dbReference>
<dbReference type="EMBL" id="AJ635385">
    <property type="protein sequence ID" value="CAG25796.1"/>
    <property type="molecule type" value="Genomic_DNA"/>
</dbReference>
<dbReference type="EMBL" id="AJ635386">
    <property type="protein sequence ID" value="CAG25797.1"/>
    <property type="molecule type" value="Genomic_DNA"/>
</dbReference>
<dbReference type="EMBL" id="AJ635387">
    <property type="protein sequence ID" value="CAG25798.1"/>
    <property type="molecule type" value="Genomic_DNA"/>
</dbReference>
<dbReference type="EMBL" id="AJ635388">
    <property type="protein sequence ID" value="CAG25799.1"/>
    <property type="molecule type" value="Genomic_DNA"/>
</dbReference>
<dbReference type="EMBL" id="AJ635389">
    <property type="protein sequence ID" value="CAG25800.1"/>
    <property type="molecule type" value="Genomic_DNA"/>
</dbReference>
<dbReference type="EMBL" id="AJ635390">
    <property type="protein sequence ID" value="CAG25801.1"/>
    <property type="molecule type" value="Genomic_DNA"/>
</dbReference>
<dbReference type="EMBL" id="AJ635392">
    <property type="protein sequence ID" value="CAG25803.1"/>
    <property type="molecule type" value="Genomic_DNA"/>
</dbReference>
<dbReference type="EMBL" id="AJ635393">
    <property type="protein sequence ID" value="CAG25804.1"/>
    <property type="molecule type" value="Genomic_DNA"/>
</dbReference>
<dbReference type="EMBL" id="AJ635394">
    <property type="protein sequence ID" value="CAG25805.1"/>
    <property type="molecule type" value="Genomic_DNA"/>
</dbReference>
<dbReference type="EMBL" id="AJ635395">
    <property type="protein sequence ID" value="CAG25806.1"/>
    <property type="molecule type" value="Genomic_DNA"/>
</dbReference>
<dbReference type="EMBL" id="AJ635396">
    <property type="protein sequence ID" value="CAG25807.1"/>
    <property type="molecule type" value="Genomic_DNA"/>
</dbReference>
<dbReference type="EMBL" id="AJ635397">
    <property type="protein sequence ID" value="CAG25808.1"/>
    <property type="molecule type" value="Genomic_DNA"/>
</dbReference>
<dbReference type="EMBL" id="AJ635398">
    <property type="protein sequence ID" value="CAG25809.1"/>
    <property type="molecule type" value="Genomic_DNA"/>
</dbReference>
<dbReference type="EMBL" id="AJ635399">
    <property type="protein sequence ID" value="CAG25810.1"/>
    <property type="molecule type" value="Genomic_DNA"/>
</dbReference>
<dbReference type="GO" id="GO:0005737">
    <property type="term" value="C:cytoplasm"/>
    <property type="evidence" value="ECO:0007669"/>
    <property type="project" value="TreeGrafter"/>
</dbReference>
<dbReference type="GO" id="GO:0030060">
    <property type="term" value="F:L-malate dehydrogenase (NAD+) activity"/>
    <property type="evidence" value="ECO:0007669"/>
    <property type="project" value="UniProtKB-EC"/>
</dbReference>
<dbReference type="GO" id="GO:0006099">
    <property type="term" value="P:tricarboxylic acid cycle"/>
    <property type="evidence" value="ECO:0007669"/>
    <property type="project" value="UniProtKB-KW"/>
</dbReference>
<dbReference type="FunFam" id="3.40.50.720:FF:000017">
    <property type="entry name" value="Malate dehydrogenase"/>
    <property type="match status" value="1"/>
</dbReference>
<dbReference type="Gene3D" id="3.40.50.720">
    <property type="entry name" value="NAD(P)-binding Rossmann-like Domain"/>
    <property type="match status" value="1"/>
</dbReference>
<dbReference type="InterPro" id="IPR001236">
    <property type="entry name" value="Lactate/malate_DH_N"/>
</dbReference>
<dbReference type="InterPro" id="IPR036291">
    <property type="entry name" value="NAD(P)-bd_dom_sf"/>
</dbReference>
<dbReference type="PANTHER" id="PTHR11540">
    <property type="entry name" value="MALATE AND LACTATE DEHYDROGENASE"/>
    <property type="match status" value="1"/>
</dbReference>
<dbReference type="PANTHER" id="PTHR11540:SF16">
    <property type="entry name" value="MALATE DEHYDROGENASE, MITOCHONDRIAL"/>
    <property type="match status" value="1"/>
</dbReference>
<dbReference type="Pfam" id="PF00056">
    <property type="entry name" value="Ldh_1_N"/>
    <property type="match status" value="1"/>
</dbReference>
<dbReference type="SUPFAM" id="SSF51735">
    <property type="entry name" value="NAD(P)-binding Rossmann-fold domains"/>
    <property type="match status" value="1"/>
</dbReference>
<proteinExistence type="evidence at protein level"/>
<protein>
    <recommendedName>
        <fullName>Malate dehydrogenase</fullName>
        <ecNumber>1.1.1.37</ecNumber>
    </recommendedName>
</protein>
<organism>
    <name type="scientific">Klebsiella pneumoniae</name>
    <dbReference type="NCBI Taxonomy" id="573"/>
    <lineage>
        <taxon>Bacteria</taxon>
        <taxon>Pseudomonadati</taxon>
        <taxon>Pseudomonadota</taxon>
        <taxon>Gammaproteobacteria</taxon>
        <taxon>Enterobacterales</taxon>
        <taxon>Enterobacteriaceae</taxon>
        <taxon>Klebsiella/Raoultella group</taxon>
        <taxon>Klebsiella</taxon>
        <taxon>Klebsiella pneumoniae complex</taxon>
    </lineage>
</organism>
<sequence>MKVAVLXAAGGIQALALLLKTSLYDIAPVTPGVAVDLSHIPTDVKIKGFSGEDATPALEGADVVLISAGVARKPGMDRSDLFNVNAGIVKNLVQQIAKTCPQACIGIITNPVNTTVAIAAEVLKKAGVYDKNKLF</sequence>
<accession>P0C1G4</accession>
<accession>P80535</accession>
<feature type="chain" id="PRO_0000113310" description="Malate dehydrogenase">
    <location>
        <begin position="1"/>
        <end position="135" status="greater than"/>
    </location>
</feature>
<feature type="binding site" evidence="1">
    <location>
        <begin position="7"/>
        <end position="12"/>
    </location>
    <ligand>
        <name>NAD(+)</name>
        <dbReference type="ChEBI" id="CHEBI:57540"/>
    </ligand>
</feature>
<feature type="binding site" evidence="1">
    <location>
        <position position="25"/>
    </location>
    <ligand>
        <name>NAD(+)</name>
        <dbReference type="ChEBI" id="CHEBI:57540"/>
    </ligand>
</feature>
<feature type="binding site" evidence="2">
    <location>
        <position position="72"/>
    </location>
    <ligand>
        <name>substrate</name>
    </ligand>
</feature>
<feature type="binding site" evidence="2">
    <location>
        <position position="78"/>
    </location>
    <ligand>
        <name>substrate</name>
    </ligand>
</feature>
<feature type="binding site" evidence="1">
    <location>
        <position position="85"/>
    </location>
    <ligand>
        <name>NAD(+)</name>
        <dbReference type="ChEBI" id="CHEBI:57540"/>
    </ligand>
</feature>
<feature type="binding site" evidence="1">
    <location>
        <begin position="108"/>
        <end position="110"/>
    </location>
    <ligand>
        <name>NAD(+)</name>
        <dbReference type="ChEBI" id="CHEBI:57540"/>
    </ligand>
</feature>
<feature type="binding site" evidence="2">
    <location>
        <position position="110"/>
    </location>
    <ligand>
        <name>substrate</name>
    </ligand>
</feature>
<feature type="sequence variant" description="In strain: ES694:2.">
    <original>V</original>
    <variation>I</variation>
    <location>
        <position position="63"/>
    </location>
</feature>
<feature type="sequence variant" description="In strain: UD711:2 and VA680:2.">
    <original>T</original>
    <variation>N</variation>
    <location>
        <position position="99"/>
    </location>
</feature>
<feature type="sequence variant" description="In strain: SB1, SB31, SB95, SB96, SO661:2, OR803:4, UD711:2, JO757:2, JO436:1, KK427:2, UD827:1, UD892:1 and VA680:2.">
    <original>I</original>
    <variation>V</variation>
    <location>
        <position position="107"/>
    </location>
</feature>
<feature type="sequence variant" description="In strain: ES694:2.">
    <original>G</original>
    <variation>D</variation>
    <location>
        <position position="127"/>
    </location>
</feature>
<feature type="non-consecutive residues" evidence="3">
    <location>
        <begin position="21"/>
        <end position="22"/>
    </location>
</feature>
<feature type="non-terminal residue">
    <location>
        <position position="135"/>
    </location>
</feature>
<keyword id="KW-0903">Direct protein sequencing</keyword>
<keyword id="KW-0520">NAD</keyword>
<keyword id="KW-0560">Oxidoreductase</keyword>
<keyword id="KW-0816">Tricarboxylic acid cycle</keyword>